<sequence length="216" mass="25244">MLEIFDVSYEELMDMRSDDLYRLRKKTFKDRLQWAVNCSNDMEFDEYDNPNTRYLLGIYGNQLICSVRFIELHRPNMITHTFNAQFDDIILPEGNYIESSRFFVDKSGAKTLLGNRYPISYVLFLAVINYTRHHKHTGIYTIVSRAMLTILKRSGWQFDVIKEAFVSEKERIYLLRLPVDKHNQALLASQVNQVLQGSDSALLAWPISLPVIPELV</sequence>
<organism>
    <name type="scientific">Yersinia ruckeri</name>
    <dbReference type="NCBI Taxonomy" id="29486"/>
    <lineage>
        <taxon>Bacteria</taxon>
        <taxon>Pseudomonadati</taxon>
        <taxon>Pseudomonadota</taxon>
        <taxon>Gammaproteobacteria</taxon>
        <taxon>Enterobacterales</taxon>
        <taxon>Yersiniaceae</taxon>
        <taxon>Yersinia</taxon>
    </lineage>
</organism>
<proteinExistence type="inferred from homology"/>
<name>YUKI_YERRU</name>
<keyword id="KW-0071">Autoinducer synthesis</keyword>
<keyword id="KW-0673">Quorum sensing</keyword>
<keyword id="KW-0949">S-adenosyl-L-methionine</keyword>
<keyword id="KW-0808">Transferase</keyword>
<protein>
    <recommendedName>
        <fullName>Acyl-homoserine-lactone synthase</fullName>
        <ecNumber>2.3.1.184</ecNumber>
    </recommendedName>
    <alternativeName>
        <fullName>Autoinducer synthesis protein YukI</fullName>
    </alternativeName>
</protein>
<feature type="chain" id="PRO_0000210903" description="Acyl-homoserine-lactone synthase">
    <location>
        <begin position="1"/>
        <end position="216"/>
    </location>
</feature>
<dbReference type="EC" id="2.3.1.184"/>
<dbReference type="EMBL" id="AF079135">
    <property type="protein sequence ID" value="AAC28701.1"/>
    <property type="molecule type" value="Genomic_DNA"/>
</dbReference>
<dbReference type="RefSeq" id="WP_038245616.1">
    <property type="nucleotide sequence ID" value="NZ_VDHI01000002.1"/>
</dbReference>
<dbReference type="SMR" id="O87970"/>
<dbReference type="STRING" id="29486.UGYR_00450"/>
<dbReference type="eggNOG" id="COG3916">
    <property type="taxonomic scope" value="Bacteria"/>
</dbReference>
<dbReference type="OrthoDB" id="6169313at2"/>
<dbReference type="GO" id="GO:0061579">
    <property type="term" value="F:N-acyl homoserine lactone synthase activity"/>
    <property type="evidence" value="ECO:0007669"/>
    <property type="project" value="UniProtKB-EC"/>
</dbReference>
<dbReference type="GO" id="GO:0009372">
    <property type="term" value="P:quorum sensing"/>
    <property type="evidence" value="ECO:0007669"/>
    <property type="project" value="UniProtKB-KW"/>
</dbReference>
<dbReference type="GO" id="GO:0007165">
    <property type="term" value="P:signal transduction"/>
    <property type="evidence" value="ECO:0007669"/>
    <property type="project" value="TreeGrafter"/>
</dbReference>
<dbReference type="Gene3D" id="3.40.630.30">
    <property type="match status" value="1"/>
</dbReference>
<dbReference type="InterPro" id="IPR016181">
    <property type="entry name" value="Acyl_CoA_acyltransferase"/>
</dbReference>
<dbReference type="InterPro" id="IPR018311">
    <property type="entry name" value="Autoind_synth_CS"/>
</dbReference>
<dbReference type="InterPro" id="IPR001690">
    <property type="entry name" value="Autoind_synthase"/>
</dbReference>
<dbReference type="PANTHER" id="PTHR39322">
    <property type="entry name" value="ACYL-HOMOSERINE-LACTONE SYNTHASE"/>
    <property type="match status" value="1"/>
</dbReference>
<dbReference type="PANTHER" id="PTHR39322:SF1">
    <property type="entry name" value="ISOVALERYL-HOMOSERINE LACTONE SYNTHASE"/>
    <property type="match status" value="1"/>
</dbReference>
<dbReference type="Pfam" id="PF00765">
    <property type="entry name" value="Autoind_synth"/>
    <property type="match status" value="1"/>
</dbReference>
<dbReference type="PRINTS" id="PR01549">
    <property type="entry name" value="AUTOINDCRSYN"/>
</dbReference>
<dbReference type="SUPFAM" id="SSF55729">
    <property type="entry name" value="Acyl-CoA N-acyltransferases (Nat)"/>
    <property type="match status" value="1"/>
</dbReference>
<dbReference type="PROSITE" id="PS00949">
    <property type="entry name" value="AUTOINDUCER_SYNTH_1"/>
    <property type="match status" value="1"/>
</dbReference>
<dbReference type="PROSITE" id="PS51187">
    <property type="entry name" value="AUTOINDUCER_SYNTH_2"/>
    <property type="match status" value="1"/>
</dbReference>
<reference key="1">
    <citation type="submission" date="1998-07" db="EMBL/GenBank/DDBJ databases">
        <title>A hierarchical quorum sensing system in Yersinia pseudotuberculosis is involved in the regulation of motility and morphology.</title>
        <authorList>
            <person name="Atkinson S."/>
            <person name="Throup J.P."/>
            <person name="Williams P."/>
            <person name="Stewart G.S.A.B."/>
        </authorList>
    </citation>
    <scope>NUCLEOTIDE SEQUENCE [GENOMIC DNA]</scope>
    <source>
        <strain>1315</strain>
    </source>
</reference>
<evidence type="ECO:0000255" key="1">
    <source>
        <dbReference type="PROSITE-ProRule" id="PRU00533"/>
    </source>
</evidence>
<gene>
    <name type="primary">yukI</name>
</gene>
<comment type="function">
    <text>Required for the synthesis of an acyl-HSL autoinducer that binds to YukR and which is involved in the regulation of motility and morphology.</text>
</comment>
<comment type="catalytic activity">
    <reaction>
        <text>a fatty acyl-[ACP] + S-adenosyl-L-methionine = an N-acyl-L-homoserine lactone + S-methyl-5'-thioadenosine + holo-[ACP] + H(+)</text>
        <dbReference type="Rhea" id="RHEA:10096"/>
        <dbReference type="Rhea" id="RHEA-COMP:9685"/>
        <dbReference type="Rhea" id="RHEA-COMP:14125"/>
        <dbReference type="ChEBI" id="CHEBI:15378"/>
        <dbReference type="ChEBI" id="CHEBI:17509"/>
        <dbReference type="ChEBI" id="CHEBI:55474"/>
        <dbReference type="ChEBI" id="CHEBI:59789"/>
        <dbReference type="ChEBI" id="CHEBI:64479"/>
        <dbReference type="ChEBI" id="CHEBI:138651"/>
        <dbReference type="EC" id="2.3.1.184"/>
    </reaction>
</comment>
<comment type="similarity">
    <text evidence="1">Belongs to the autoinducer synthase family.</text>
</comment>
<accession>O87970</accession>